<dbReference type="EC" id="2.1.1.181" evidence="1"/>
<dbReference type="EMBL" id="CP000720">
    <property type="protein sequence ID" value="ABS45888.1"/>
    <property type="molecule type" value="Genomic_DNA"/>
</dbReference>
<dbReference type="SMR" id="A7FGU1"/>
<dbReference type="KEGG" id="ypi:YpsIP31758_1491"/>
<dbReference type="HOGENOM" id="CLU_027534_3_0_6"/>
<dbReference type="Proteomes" id="UP000002412">
    <property type="component" value="Chromosome"/>
</dbReference>
<dbReference type="GO" id="GO:0005737">
    <property type="term" value="C:cytoplasm"/>
    <property type="evidence" value="ECO:0007669"/>
    <property type="project" value="UniProtKB-SubCell"/>
</dbReference>
<dbReference type="GO" id="GO:0052907">
    <property type="term" value="F:23S rRNA (adenine(1618)-N(6))-methyltransferase activity"/>
    <property type="evidence" value="ECO:0007669"/>
    <property type="project" value="UniProtKB-EC"/>
</dbReference>
<dbReference type="GO" id="GO:0070475">
    <property type="term" value="P:rRNA base methylation"/>
    <property type="evidence" value="ECO:0007669"/>
    <property type="project" value="TreeGrafter"/>
</dbReference>
<dbReference type="CDD" id="cd02440">
    <property type="entry name" value="AdoMet_MTases"/>
    <property type="match status" value="1"/>
</dbReference>
<dbReference type="FunFam" id="3.40.50.150:FF:000045">
    <property type="entry name" value="Ribosomal RNA large subunit methyltransferase F"/>
    <property type="match status" value="1"/>
</dbReference>
<dbReference type="Gene3D" id="3.40.50.150">
    <property type="entry name" value="Vaccinia Virus protein VP39"/>
    <property type="match status" value="1"/>
</dbReference>
<dbReference type="HAMAP" id="MF_01848">
    <property type="entry name" value="23SrRNA_methyltr_F"/>
    <property type="match status" value="1"/>
</dbReference>
<dbReference type="InterPro" id="IPR010286">
    <property type="entry name" value="METTL16/RlmF"/>
</dbReference>
<dbReference type="InterPro" id="IPR016909">
    <property type="entry name" value="rRNA_lsu_MeTfrase_F"/>
</dbReference>
<dbReference type="InterPro" id="IPR029063">
    <property type="entry name" value="SAM-dependent_MTases_sf"/>
</dbReference>
<dbReference type="NCBIfam" id="NF008725">
    <property type="entry name" value="PRK11727.1"/>
    <property type="match status" value="1"/>
</dbReference>
<dbReference type="PANTHER" id="PTHR13393:SF0">
    <property type="entry name" value="RNA N6-ADENOSINE-METHYLTRANSFERASE METTL16"/>
    <property type="match status" value="1"/>
</dbReference>
<dbReference type="PANTHER" id="PTHR13393">
    <property type="entry name" value="SAM-DEPENDENT METHYLTRANSFERASE"/>
    <property type="match status" value="1"/>
</dbReference>
<dbReference type="Pfam" id="PF05971">
    <property type="entry name" value="Methyltransf_10"/>
    <property type="match status" value="1"/>
</dbReference>
<dbReference type="PIRSF" id="PIRSF029038">
    <property type="entry name" value="Mtase_YbiN_prd"/>
    <property type="match status" value="1"/>
</dbReference>
<dbReference type="SUPFAM" id="SSF53335">
    <property type="entry name" value="S-adenosyl-L-methionine-dependent methyltransferases"/>
    <property type="match status" value="1"/>
</dbReference>
<feature type="chain" id="PRO_0000349988" description="Ribosomal RNA large subunit methyltransferase F">
    <location>
        <begin position="1"/>
        <end position="336"/>
    </location>
</feature>
<accession>A7FGU1</accession>
<keyword id="KW-0963">Cytoplasm</keyword>
<keyword id="KW-0489">Methyltransferase</keyword>
<keyword id="KW-0698">rRNA processing</keyword>
<keyword id="KW-0949">S-adenosyl-L-methionine</keyword>
<keyword id="KW-0808">Transferase</keyword>
<reference key="1">
    <citation type="journal article" date="2007" name="PLoS Genet.">
        <title>The complete genome sequence of Yersinia pseudotuberculosis IP31758, the causative agent of Far East scarlet-like fever.</title>
        <authorList>
            <person name="Eppinger M."/>
            <person name="Rosovitz M.J."/>
            <person name="Fricke W.F."/>
            <person name="Rasko D.A."/>
            <person name="Kokorina G."/>
            <person name="Fayolle C."/>
            <person name="Lindler L.E."/>
            <person name="Carniel E."/>
            <person name="Ravel J."/>
        </authorList>
    </citation>
    <scope>NUCLEOTIDE SEQUENCE [LARGE SCALE GENOMIC DNA]</scope>
    <source>
        <strain>IP 31758</strain>
    </source>
</reference>
<comment type="function">
    <text evidence="1">Specifically methylates the adenine in position 1618 of 23S rRNA.</text>
</comment>
<comment type="catalytic activity">
    <reaction evidence="1">
        <text>adenosine(1618) in 23S rRNA + S-adenosyl-L-methionine = N(6)-methyladenosine(1618) in 23S rRNA + S-adenosyl-L-homocysteine + H(+)</text>
        <dbReference type="Rhea" id="RHEA:16497"/>
        <dbReference type="Rhea" id="RHEA-COMP:10229"/>
        <dbReference type="Rhea" id="RHEA-COMP:10231"/>
        <dbReference type="ChEBI" id="CHEBI:15378"/>
        <dbReference type="ChEBI" id="CHEBI:57856"/>
        <dbReference type="ChEBI" id="CHEBI:59789"/>
        <dbReference type="ChEBI" id="CHEBI:74411"/>
        <dbReference type="ChEBI" id="CHEBI:74449"/>
        <dbReference type="EC" id="2.1.1.181"/>
    </reaction>
</comment>
<comment type="subcellular location">
    <subcellularLocation>
        <location evidence="1">Cytoplasm</location>
    </subcellularLocation>
</comment>
<comment type="similarity">
    <text evidence="1">Belongs to the methyltransferase superfamily. METTL16/RlmF family.</text>
</comment>
<organism>
    <name type="scientific">Yersinia pseudotuberculosis serotype O:1b (strain IP 31758)</name>
    <dbReference type="NCBI Taxonomy" id="349747"/>
    <lineage>
        <taxon>Bacteria</taxon>
        <taxon>Pseudomonadati</taxon>
        <taxon>Pseudomonadota</taxon>
        <taxon>Gammaproteobacteria</taxon>
        <taxon>Enterobacterales</taxon>
        <taxon>Yersiniaceae</taxon>
        <taxon>Yersinia</taxon>
    </lineage>
</organism>
<proteinExistence type="inferred from homology"/>
<gene>
    <name evidence="1" type="primary">rlmF</name>
    <name type="ordered locus">YpsIP31758_1491</name>
</gene>
<name>RLMF_YERP3</name>
<evidence type="ECO:0000255" key="1">
    <source>
        <dbReference type="HAMAP-Rule" id="MF_01848"/>
    </source>
</evidence>
<protein>
    <recommendedName>
        <fullName evidence="1">Ribosomal RNA large subunit methyltransferase F</fullName>
        <ecNumber evidence="1">2.1.1.181</ecNumber>
    </recommendedName>
    <alternativeName>
        <fullName evidence="1">23S rRNA mA1618 methyltransferase</fullName>
    </alternativeName>
    <alternativeName>
        <fullName evidence="1">rRNA adenine N-6-methyltransferase</fullName>
    </alternativeName>
</protein>
<sequence>MLSYAPENAYQRASTMENKKVFPKEKSGLHPRNRHRSRYDFDALSVSCPELIPFLAPTAYGDISVDFADPLAVKMLNKALLKHFYGIEYWDIPADSLCPPIPGRADYVHHLADLLASCNGEVIPKGKNIALLDIGVGANCIYPIIGQREYGWRFTGTDIDSHALSAAKMVVSMNPTLKNTLRLKQQKDPHAIFEGVWAVNERYDATLCNPPFHGSAEEAAATTRRKLHKLGKNEVAAKPVQNFGGKNSELWCEGGEEGFVSRMVAESVAKAQNCFWFTSLISKKTTLPAIYHALRYVKAVEVRTIEMAQGQKVSRFVAWTFLTPEQQAAWVAERWA</sequence>